<protein>
    <recommendedName>
        <fullName evidence="1">LexA repressor</fullName>
        <ecNumber evidence="1">3.4.21.88</ecNumber>
    </recommendedName>
</protein>
<reference key="1">
    <citation type="journal article" date="2000" name="Nature">
        <title>The genome sequence of the plant pathogen Xylella fastidiosa.</title>
        <authorList>
            <person name="Simpson A.J.G."/>
            <person name="Reinach F.C."/>
            <person name="Arruda P."/>
            <person name="Abreu F.A."/>
            <person name="Acencio M."/>
            <person name="Alvarenga R."/>
            <person name="Alves L.M.C."/>
            <person name="Araya J.E."/>
            <person name="Baia G.S."/>
            <person name="Baptista C.S."/>
            <person name="Barros M.H."/>
            <person name="Bonaccorsi E.D."/>
            <person name="Bordin S."/>
            <person name="Bove J.M."/>
            <person name="Briones M.R.S."/>
            <person name="Bueno M.R.P."/>
            <person name="Camargo A.A."/>
            <person name="Camargo L.E.A."/>
            <person name="Carraro D.M."/>
            <person name="Carrer H."/>
            <person name="Colauto N.B."/>
            <person name="Colombo C."/>
            <person name="Costa F.F."/>
            <person name="Costa M.C.R."/>
            <person name="Costa-Neto C.M."/>
            <person name="Coutinho L.L."/>
            <person name="Cristofani M."/>
            <person name="Dias-Neto E."/>
            <person name="Docena C."/>
            <person name="El-Dorry H."/>
            <person name="Facincani A.P."/>
            <person name="Ferreira A.J.S."/>
            <person name="Ferreira V.C.A."/>
            <person name="Ferro J.A."/>
            <person name="Fraga J.S."/>
            <person name="Franca S.C."/>
            <person name="Franco M.C."/>
            <person name="Frohme M."/>
            <person name="Furlan L.R."/>
            <person name="Garnier M."/>
            <person name="Goldman G.H."/>
            <person name="Goldman M.H.S."/>
            <person name="Gomes S.L."/>
            <person name="Gruber A."/>
            <person name="Ho P.L."/>
            <person name="Hoheisel J.D."/>
            <person name="Junqueira M.L."/>
            <person name="Kemper E.L."/>
            <person name="Kitajima J.P."/>
            <person name="Krieger J.E."/>
            <person name="Kuramae E.E."/>
            <person name="Laigret F."/>
            <person name="Lambais M.R."/>
            <person name="Leite L.C.C."/>
            <person name="Lemos E.G.M."/>
            <person name="Lemos M.V.F."/>
            <person name="Lopes S.A."/>
            <person name="Lopes C.R."/>
            <person name="Machado J.A."/>
            <person name="Machado M.A."/>
            <person name="Madeira A.M.B.N."/>
            <person name="Madeira H.M.F."/>
            <person name="Marino C.L."/>
            <person name="Marques M.V."/>
            <person name="Martins E.A.L."/>
            <person name="Martins E.M.F."/>
            <person name="Matsukuma A.Y."/>
            <person name="Menck C.F.M."/>
            <person name="Miracca E.C."/>
            <person name="Miyaki C.Y."/>
            <person name="Monteiro-Vitorello C.B."/>
            <person name="Moon D.H."/>
            <person name="Nagai M.A."/>
            <person name="Nascimento A.L.T.O."/>
            <person name="Netto L.E.S."/>
            <person name="Nhani A. Jr."/>
            <person name="Nobrega F.G."/>
            <person name="Nunes L.R."/>
            <person name="Oliveira M.A."/>
            <person name="de Oliveira M.C."/>
            <person name="de Oliveira R.C."/>
            <person name="Palmieri D.A."/>
            <person name="Paris A."/>
            <person name="Peixoto B.R."/>
            <person name="Pereira G.A.G."/>
            <person name="Pereira H.A. Jr."/>
            <person name="Pesquero J.B."/>
            <person name="Quaggio R.B."/>
            <person name="Roberto P.G."/>
            <person name="Rodrigues V."/>
            <person name="de Rosa A.J.M."/>
            <person name="de Rosa V.E. Jr."/>
            <person name="de Sa R.G."/>
            <person name="Santelli R.V."/>
            <person name="Sawasaki H.E."/>
            <person name="da Silva A.C.R."/>
            <person name="da Silva A.M."/>
            <person name="da Silva F.R."/>
            <person name="Silva W.A. Jr."/>
            <person name="da Silveira J.F."/>
            <person name="Silvestri M.L.Z."/>
            <person name="Siqueira W.J."/>
            <person name="de Souza A.A."/>
            <person name="de Souza A.P."/>
            <person name="Terenzi M.F."/>
            <person name="Truffi D."/>
            <person name="Tsai S.M."/>
            <person name="Tsuhako M.H."/>
            <person name="Vallada H."/>
            <person name="Van Sluys M.A."/>
            <person name="Verjovski-Almeida S."/>
            <person name="Vettore A.L."/>
            <person name="Zago M.A."/>
            <person name="Zatz M."/>
            <person name="Meidanis J."/>
            <person name="Setubal J.C."/>
        </authorList>
    </citation>
    <scope>NUCLEOTIDE SEQUENCE [LARGE SCALE GENOMIC DNA]</scope>
    <source>
        <strain>9a5c</strain>
    </source>
</reference>
<proteinExistence type="inferred from homology"/>
<accession>Q9PH24</accession>
<organism>
    <name type="scientific">Xylella fastidiosa (strain 9a5c)</name>
    <dbReference type="NCBI Taxonomy" id="160492"/>
    <lineage>
        <taxon>Bacteria</taxon>
        <taxon>Pseudomonadati</taxon>
        <taxon>Pseudomonadota</taxon>
        <taxon>Gammaproteobacteria</taxon>
        <taxon>Lysobacterales</taxon>
        <taxon>Lysobacteraceae</taxon>
        <taxon>Xylella</taxon>
    </lineage>
</organism>
<dbReference type="EC" id="3.4.21.88" evidence="1"/>
<dbReference type="EMBL" id="AE003849">
    <property type="protein sequence ID" value="AAF82935.1"/>
    <property type="status" value="ALT_INIT"/>
    <property type="molecule type" value="Genomic_DNA"/>
</dbReference>
<dbReference type="PIR" id="H82846">
    <property type="entry name" value="H82846"/>
</dbReference>
<dbReference type="RefSeq" id="WP_023906043.1">
    <property type="nucleotide sequence ID" value="NC_002488.3"/>
</dbReference>
<dbReference type="SMR" id="Q9PH24"/>
<dbReference type="STRING" id="160492.XF_0122"/>
<dbReference type="MEROPS" id="S24.001"/>
<dbReference type="KEGG" id="xfa:XF_0122"/>
<dbReference type="eggNOG" id="COG1974">
    <property type="taxonomic scope" value="Bacteria"/>
</dbReference>
<dbReference type="HOGENOM" id="CLU_066192_45_3_6"/>
<dbReference type="Proteomes" id="UP000000812">
    <property type="component" value="Chromosome"/>
</dbReference>
<dbReference type="CollecTF" id="EXPREG_000017c0"/>
<dbReference type="GO" id="GO:0032993">
    <property type="term" value="C:protein-DNA complex"/>
    <property type="evidence" value="ECO:0000315"/>
    <property type="project" value="CollecTF"/>
</dbReference>
<dbReference type="GO" id="GO:0001217">
    <property type="term" value="F:DNA-binding transcription repressor activity"/>
    <property type="evidence" value="ECO:0000315"/>
    <property type="project" value="CollecTF"/>
</dbReference>
<dbReference type="GO" id="GO:0004252">
    <property type="term" value="F:serine-type endopeptidase activity"/>
    <property type="evidence" value="ECO:0007669"/>
    <property type="project" value="UniProtKB-UniRule"/>
</dbReference>
<dbReference type="GO" id="GO:0000976">
    <property type="term" value="F:transcription cis-regulatory region binding"/>
    <property type="evidence" value="ECO:0000315"/>
    <property type="project" value="CollecTF"/>
</dbReference>
<dbReference type="GO" id="GO:0006281">
    <property type="term" value="P:DNA repair"/>
    <property type="evidence" value="ECO:0007669"/>
    <property type="project" value="UniProtKB-UniRule"/>
</dbReference>
<dbReference type="GO" id="GO:0006260">
    <property type="term" value="P:DNA replication"/>
    <property type="evidence" value="ECO:0007669"/>
    <property type="project" value="UniProtKB-UniRule"/>
</dbReference>
<dbReference type="GO" id="GO:0045892">
    <property type="term" value="P:negative regulation of DNA-templated transcription"/>
    <property type="evidence" value="ECO:0000269"/>
    <property type="project" value="CollecTF"/>
</dbReference>
<dbReference type="GO" id="GO:0006508">
    <property type="term" value="P:proteolysis"/>
    <property type="evidence" value="ECO:0007669"/>
    <property type="project" value="InterPro"/>
</dbReference>
<dbReference type="GO" id="GO:0009432">
    <property type="term" value="P:SOS response"/>
    <property type="evidence" value="ECO:0000269"/>
    <property type="project" value="CollecTF"/>
</dbReference>
<dbReference type="CDD" id="cd06529">
    <property type="entry name" value="S24_LexA-like"/>
    <property type="match status" value="1"/>
</dbReference>
<dbReference type="FunFam" id="1.10.10.10:FF:000009">
    <property type="entry name" value="LexA repressor"/>
    <property type="match status" value="1"/>
</dbReference>
<dbReference type="FunFam" id="2.10.109.10:FF:000001">
    <property type="entry name" value="LexA repressor"/>
    <property type="match status" value="1"/>
</dbReference>
<dbReference type="Gene3D" id="2.10.109.10">
    <property type="entry name" value="Umud Fragment, subunit A"/>
    <property type="match status" value="1"/>
</dbReference>
<dbReference type="Gene3D" id="1.10.10.10">
    <property type="entry name" value="Winged helix-like DNA-binding domain superfamily/Winged helix DNA-binding domain"/>
    <property type="match status" value="1"/>
</dbReference>
<dbReference type="HAMAP" id="MF_00015">
    <property type="entry name" value="LexA"/>
    <property type="match status" value="1"/>
</dbReference>
<dbReference type="InterPro" id="IPR006200">
    <property type="entry name" value="LexA"/>
</dbReference>
<dbReference type="InterPro" id="IPR039418">
    <property type="entry name" value="LexA-like"/>
</dbReference>
<dbReference type="InterPro" id="IPR036286">
    <property type="entry name" value="LexA/Signal_pep-like_sf"/>
</dbReference>
<dbReference type="InterPro" id="IPR006199">
    <property type="entry name" value="LexA_DNA-bd_dom"/>
</dbReference>
<dbReference type="InterPro" id="IPR050077">
    <property type="entry name" value="LexA_repressor"/>
</dbReference>
<dbReference type="InterPro" id="IPR006197">
    <property type="entry name" value="Peptidase_S24_LexA"/>
</dbReference>
<dbReference type="InterPro" id="IPR015927">
    <property type="entry name" value="Peptidase_S24_S26A/B/C"/>
</dbReference>
<dbReference type="InterPro" id="IPR036388">
    <property type="entry name" value="WH-like_DNA-bd_sf"/>
</dbReference>
<dbReference type="InterPro" id="IPR036390">
    <property type="entry name" value="WH_DNA-bd_sf"/>
</dbReference>
<dbReference type="NCBIfam" id="TIGR00498">
    <property type="entry name" value="lexA"/>
    <property type="match status" value="1"/>
</dbReference>
<dbReference type="PANTHER" id="PTHR33516">
    <property type="entry name" value="LEXA REPRESSOR"/>
    <property type="match status" value="1"/>
</dbReference>
<dbReference type="PANTHER" id="PTHR33516:SF2">
    <property type="entry name" value="LEXA REPRESSOR-RELATED"/>
    <property type="match status" value="1"/>
</dbReference>
<dbReference type="Pfam" id="PF01726">
    <property type="entry name" value="LexA_DNA_bind"/>
    <property type="match status" value="1"/>
</dbReference>
<dbReference type="Pfam" id="PF00717">
    <property type="entry name" value="Peptidase_S24"/>
    <property type="match status" value="1"/>
</dbReference>
<dbReference type="PRINTS" id="PR00726">
    <property type="entry name" value="LEXASERPTASE"/>
</dbReference>
<dbReference type="SUPFAM" id="SSF51306">
    <property type="entry name" value="LexA/Signal peptidase"/>
    <property type="match status" value="1"/>
</dbReference>
<dbReference type="SUPFAM" id="SSF46785">
    <property type="entry name" value="Winged helix' DNA-binding domain"/>
    <property type="match status" value="1"/>
</dbReference>
<gene>
    <name evidence="1" type="primary">lexA</name>
    <name type="ordered locus">XF_0122</name>
</gene>
<comment type="function">
    <text evidence="1">Represses a number of genes involved in the response to DNA damage (SOS response), including recA and lexA. In the presence of single-stranded DNA, RecA interacts with LexA causing an autocatalytic cleavage which disrupts the DNA-binding part of LexA, leading to derepression of the SOS regulon and eventually DNA repair.</text>
</comment>
<comment type="catalytic activity">
    <reaction evidence="1">
        <text>Hydrolysis of Ala-|-Gly bond in repressor LexA.</text>
        <dbReference type="EC" id="3.4.21.88"/>
    </reaction>
</comment>
<comment type="subunit">
    <text evidence="1">Homodimer.</text>
</comment>
<comment type="similarity">
    <text evidence="1">Belongs to the peptidase S24 family.</text>
</comment>
<comment type="sequence caution" evidence="2">
    <conflict type="erroneous initiation">
        <sequence resource="EMBL-CDS" id="AAF82935"/>
    </conflict>
</comment>
<name>LEXA_XYLFA</name>
<feature type="chain" id="PRO_0000170113" description="LexA repressor">
    <location>
        <begin position="1"/>
        <end position="211"/>
    </location>
</feature>
<feature type="DNA-binding region" description="H-T-H motif" evidence="1">
    <location>
        <begin position="27"/>
        <end position="47"/>
    </location>
</feature>
<feature type="active site" description="For autocatalytic cleavage activity" evidence="1">
    <location>
        <position position="131"/>
    </location>
</feature>
<feature type="active site" description="For autocatalytic cleavage activity" evidence="1">
    <location>
        <position position="168"/>
    </location>
</feature>
<feature type="site" description="Cleavage; by autolysis" evidence="1">
    <location>
        <begin position="96"/>
        <end position="97"/>
    </location>
</feature>
<keyword id="KW-0068">Autocatalytic cleavage</keyword>
<keyword id="KW-0227">DNA damage</keyword>
<keyword id="KW-0234">DNA repair</keyword>
<keyword id="KW-0235">DNA replication</keyword>
<keyword id="KW-0238">DNA-binding</keyword>
<keyword id="KW-0378">Hydrolase</keyword>
<keyword id="KW-0678">Repressor</keyword>
<keyword id="KW-0742">SOS response</keyword>
<keyword id="KW-0804">Transcription</keyword>
<keyword id="KW-0805">Transcription regulation</keyword>
<evidence type="ECO:0000255" key="1">
    <source>
        <dbReference type="HAMAP-Rule" id="MF_00015"/>
    </source>
</evidence>
<evidence type="ECO:0000305" key="2"/>
<sequence length="211" mass="23395">MSLSDIQQAILSLITNHINADGVSPSQTEIARAFGFKGVRAVQHHLDVLEQQGMIRRVPRQARGIRLKHLTEVDETALALQSEDVLRLPVLGRVAAGQPIGADIGEGRVVLLDRVFFSPAPDYLLRVQGDSMRDEGIFDGDLIGVHRTQDAHSGQIVVARIDDEITVKLLKISKDRIRLLPRNPDFAPIEVRSDQDFAIEGLYCGLLRPNR</sequence>